<proteinExistence type="inferred from homology"/>
<feature type="chain" id="PRO_1000052051" description="Large ribosomal subunit protein uL3">
    <location>
        <begin position="1"/>
        <end position="210"/>
    </location>
</feature>
<feature type="region of interest" description="Disordered" evidence="2">
    <location>
        <begin position="133"/>
        <end position="152"/>
    </location>
</feature>
<feature type="modified residue" description="N5-methylglutamine" evidence="1">
    <location>
        <position position="151"/>
    </location>
</feature>
<sequence>MSLGLVGRKCGMTRIFTEDGVSIPVTVVQVEPNKVTQVKTVEKDGYNAIQVTTGFKKRSNVNKPMAGHYAKASVEPGRGLWEFTVDAAAEYQVGSSFDATMFEAGQKVDVRGVSKGKGFQGGVKRHNFATQDATHGNSLSHRVHGSTGQNQTPGRVFKNKKMAGHLGNENVTIQSLEVVRVDAENGLLLLKGGIPGSVGGDIIVTPAVKS</sequence>
<comment type="function">
    <text evidence="1">One of the primary rRNA binding proteins, it binds directly near the 3'-end of the 23S rRNA, where it nucleates assembly of the 50S subunit.</text>
</comment>
<comment type="subunit">
    <text evidence="1">Part of the 50S ribosomal subunit. Forms a cluster with proteins L14 and L19.</text>
</comment>
<comment type="PTM">
    <text evidence="1">Methylated by PrmB.</text>
</comment>
<comment type="similarity">
    <text evidence="1">Belongs to the universal ribosomal protein uL3 family.</text>
</comment>
<reference key="1">
    <citation type="journal article" date="2009" name="PLoS ONE">
        <title>Complete genome sequence of Francisella tularensis subspecies holarctica FTNF002-00.</title>
        <authorList>
            <person name="Barabote R.D."/>
            <person name="Xie G."/>
            <person name="Brettin T.S."/>
            <person name="Hinrichs S.H."/>
            <person name="Fey P.D."/>
            <person name="Jay J.J."/>
            <person name="Engle J.L."/>
            <person name="Godbole S.D."/>
            <person name="Noronha J.M."/>
            <person name="Scheuermann R.H."/>
            <person name="Zhou L.W."/>
            <person name="Lion C."/>
            <person name="Dempsey M.P."/>
        </authorList>
    </citation>
    <scope>NUCLEOTIDE SEQUENCE [LARGE SCALE GENOMIC DNA]</scope>
    <source>
        <strain>FTNF002-00 / FTA</strain>
    </source>
</reference>
<name>RL3_FRATF</name>
<organism>
    <name type="scientific">Francisella tularensis subsp. holarctica (strain FTNF002-00 / FTA)</name>
    <dbReference type="NCBI Taxonomy" id="458234"/>
    <lineage>
        <taxon>Bacteria</taxon>
        <taxon>Pseudomonadati</taxon>
        <taxon>Pseudomonadota</taxon>
        <taxon>Gammaproteobacteria</taxon>
        <taxon>Thiotrichales</taxon>
        <taxon>Francisellaceae</taxon>
        <taxon>Francisella</taxon>
    </lineage>
</organism>
<protein>
    <recommendedName>
        <fullName evidence="1">Large ribosomal subunit protein uL3</fullName>
    </recommendedName>
    <alternativeName>
        <fullName evidence="3">50S ribosomal protein L3</fullName>
    </alternativeName>
</protein>
<gene>
    <name evidence="1" type="primary">rplC</name>
    <name type="ordered locus">FTA_0252</name>
</gene>
<evidence type="ECO:0000255" key="1">
    <source>
        <dbReference type="HAMAP-Rule" id="MF_01325"/>
    </source>
</evidence>
<evidence type="ECO:0000256" key="2">
    <source>
        <dbReference type="SAM" id="MobiDB-lite"/>
    </source>
</evidence>
<evidence type="ECO:0000305" key="3"/>
<keyword id="KW-0488">Methylation</keyword>
<keyword id="KW-0687">Ribonucleoprotein</keyword>
<keyword id="KW-0689">Ribosomal protein</keyword>
<keyword id="KW-0694">RNA-binding</keyword>
<keyword id="KW-0699">rRNA-binding</keyword>
<accession>A7N9S6</accession>
<dbReference type="EMBL" id="CP000803">
    <property type="protein sequence ID" value="ABU60729.1"/>
    <property type="molecule type" value="Genomic_DNA"/>
</dbReference>
<dbReference type="RefSeq" id="WP_003027202.1">
    <property type="nucleotide sequence ID" value="NC_009749.1"/>
</dbReference>
<dbReference type="SMR" id="A7N9S6"/>
<dbReference type="GeneID" id="75264261"/>
<dbReference type="KEGG" id="fta:FTA_0252"/>
<dbReference type="HOGENOM" id="CLU_044142_4_1_6"/>
<dbReference type="GO" id="GO:0022625">
    <property type="term" value="C:cytosolic large ribosomal subunit"/>
    <property type="evidence" value="ECO:0007669"/>
    <property type="project" value="TreeGrafter"/>
</dbReference>
<dbReference type="GO" id="GO:0019843">
    <property type="term" value="F:rRNA binding"/>
    <property type="evidence" value="ECO:0007669"/>
    <property type="project" value="UniProtKB-UniRule"/>
</dbReference>
<dbReference type="GO" id="GO:0003735">
    <property type="term" value="F:structural constituent of ribosome"/>
    <property type="evidence" value="ECO:0007669"/>
    <property type="project" value="InterPro"/>
</dbReference>
<dbReference type="GO" id="GO:0006412">
    <property type="term" value="P:translation"/>
    <property type="evidence" value="ECO:0007669"/>
    <property type="project" value="UniProtKB-UniRule"/>
</dbReference>
<dbReference type="FunFam" id="2.40.30.10:FF:000004">
    <property type="entry name" value="50S ribosomal protein L3"/>
    <property type="match status" value="1"/>
</dbReference>
<dbReference type="FunFam" id="3.30.160.810:FF:000001">
    <property type="entry name" value="50S ribosomal protein L3"/>
    <property type="match status" value="1"/>
</dbReference>
<dbReference type="Gene3D" id="3.30.160.810">
    <property type="match status" value="1"/>
</dbReference>
<dbReference type="Gene3D" id="2.40.30.10">
    <property type="entry name" value="Translation factors"/>
    <property type="match status" value="1"/>
</dbReference>
<dbReference type="HAMAP" id="MF_01325_B">
    <property type="entry name" value="Ribosomal_uL3_B"/>
    <property type="match status" value="1"/>
</dbReference>
<dbReference type="InterPro" id="IPR000597">
    <property type="entry name" value="Ribosomal_uL3"/>
</dbReference>
<dbReference type="InterPro" id="IPR019927">
    <property type="entry name" value="Ribosomal_uL3_bac/org-type"/>
</dbReference>
<dbReference type="InterPro" id="IPR019926">
    <property type="entry name" value="Ribosomal_uL3_CS"/>
</dbReference>
<dbReference type="InterPro" id="IPR009000">
    <property type="entry name" value="Transl_B-barrel_sf"/>
</dbReference>
<dbReference type="NCBIfam" id="TIGR03625">
    <property type="entry name" value="L3_bact"/>
    <property type="match status" value="1"/>
</dbReference>
<dbReference type="PANTHER" id="PTHR11229">
    <property type="entry name" value="50S RIBOSOMAL PROTEIN L3"/>
    <property type="match status" value="1"/>
</dbReference>
<dbReference type="PANTHER" id="PTHR11229:SF16">
    <property type="entry name" value="LARGE RIBOSOMAL SUBUNIT PROTEIN UL3C"/>
    <property type="match status" value="1"/>
</dbReference>
<dbReference type="Pfam" id="PF00297">
    <property type="entry name" value="Ribosomal_L3"/>
    <property type="match status" value="1"/>
</dbReference>
<dbReference type="SUPFAM" id="SSF50447">
    <property type="entry name" value="Translation proteins"/>
    <property type="match status" value="1"/>
</dbReference>
<dbReference type="PROSITE" id="PS00474">
    <property type="entry name" value="RIBOSOMAL_L3"/>
    <property type="match status" value="1"/>
</dbReference>